<sequence>MVWRTLVASNFSTCPNGSIQWIWDVFGECAQDGWDEASVALGLVSIFCFAASTFPQYIKACKTGNMDQALSLWFLLGWIGGDSCNLIGSFLADQLPLQTYTAVYYVLADLLMLTLYFHYKFKKQPSLLSAPINSVLLFILGTVCITPLLSSTDPVAVPREGFRGRTLLSVEPGNKPFTKKEVVGFVIGSASSVLYLLSRLPQIRTNFVRQSTQGISYSLFALVMLGNTLYGLSVLLKNPEVGQSEGSYLLHHLPWLVGSLGVLLLDTIISIQFLVYRSHDADAASEREPLLPS</sequence>
<reference key="1">
    <citation type="journal article" date="2004" name="Nature">
        <title>Genome sequence of the Brown Norway rat yields insights into mammalian evolution.</title>
        <authorList>
            <person name="Gibbs R.A."/>
            <person name="Weinstock G.M."/>
            <person name="Metzker M.L."/>
            <person name="Muzny D.M."/>
            <person name="Sodergren E.J."/>
            <person name="Scherer S."/>
            <person name="Scott G."/>
            <person name="Steffen D."/>
            <person name="Worley K.C."/>
            <person name="Burch P.E."/>
            <person name="Okwuonu G."/>
            <person name="Hines S."/>
            <person name="Lewis L."/>
            <person name="Deramo C."/>
            <person name="Delgado O."/>
            <person name="Dugan-Rocha S."/>
            <person name="Miner G."/>
            <person name="Morgan M."/>
            <person name="Hawes A."/>
            <person name="Gill R."/>
            <person name="Holt R.A."/>
            <person name="Adams M.D."/>
            <person name="Amanatides P.G."/>
            <person name="Baden-Tillson H."/>
            <person name="Barnstead M."/>
            <person name="Chin S."/>
            <person name="Evans C.A."/>
            <person name="Ferriera S."/>
            <person name="Fosler C."/>
            <person name="Glodek A."/>
            <person name="Gu Z."/>
            <person name="Jennings D."/>
            <person name="Kraft C.L."/>
            <person name="Nguyen T."/>
            <person name="Pfannkoch C.M."/>
            <person name="Sitter C."/>
            <person name="Sutton G.G."/>
            <person name="Venter J.C."/>
            <person name="Woodage T."/>
            <person name="Smith D."/>
            <person name="Lee H.-M."/>
            <person name="Gustafson E."/>
            <person name="Cahill P."/>
            <person name="Kana A."/>
            <person name="Doucette-Stamm L."/>
            <person name="Weinstock K."/>
            <person name="Fechtel K."/>
            <person name="Weiss R.B."/>
            <person name="Dunn D.M."/>
            <person name="Green E.D."/>
            <person name="Blakesley R.W."/>
            <person name="Bouffard G.G."/>
            <person name="De Jong P.J."/>
            <person name="Osoegawa K."/>
            <person name="Zhu B."/>
            <person name="Marra M."/>
            <person name="Schein J."/>
            <person name="Bosdet I."/>
            <person name="Fjell C."/>
            <person name="Jones S."/>
            <person name="Krzywinski M."/>
            <person name="Mathewson C."/>
            <person name="Siddiqui A."/>
            <person name="Wye N."/>
            <person name="McPherson J."/>
            <person name="Zhao S."/>
            <person name="Fraser C.M."/>
            <person name="Shetty J."/>
            <person name="Shatsman S."/>
            <person name="Geer K."/>
            <person name="Chen Y."/>
            <person name="Abramzon S."/>
            <person name="Nierman W.C."/>
            <person name="Havlak P.H."/>
            <person name="Chen R."/>
            <person name="Durbin K.J."/>
            <person name="Egan A."/>
            <person name="Ren Y."/>
            <person name="Song X.-Z."/>
            <person name="Li B."/>
            <person name="Liu Y."/>
            <person name="Qin X."/>
            <person name="Cawley S."/>
            <person name="Cooney A.J."/>
            <person name="D'Souza L.M."/>
            <person name="Martin K."/>
            <person name="Wu J.Q."/>
            <person name="Gonzalez-Garay M.L."/>
            <person name="Jackson A.R."/>
            <person name="Kalafus K.J."/>
            <person name="McLeod M.P."/>
            <person name="Milosavljevic A."/>
            <person name="Virk D."/>
            <person name="Volkov A."/>
            <person name="Wheeler D.A."/>
            <person name="Zhang Z."/>
            <person name="Bailey J.A."/>
            <person name="Eichler E.E."/>
            <person name="Tuzun E."/>
            <person name="Birney E."/>
            <person name="Mongin E."/>
            <person name="Ureta-Vidal A."/>
            <person name="Woodwark C."/>
            <person name="Zdobnov E."/>
            <person name="Bork P."/>
            <person name="Suyama M."/>
            <person name="Torrents D."/>
            <person name="Alexandersson M."/>
            <person name="Trask B.J."/>
            <person name="Young J.M."/>
            <person name="Huang H."/>
            <person name="Wang H."/>
            <person name="Xing H."/>
            <person name="Daniels S."/>
            <person name="Gietzen D."/>
            <person name="Schmidt J."/>
            <person name="Stevens K."/>
            <person name="Vitt U."/>
            <person name="Wingrove J."/>
            <person name="Camara F."/>
            <person name="Mar Alba M."/>
            <person name="Abril J.F."/>
            <person name="Guigo R."/>
            <person name="Smit A."/>
            <person name="Dubchak I."/>
            <person name="Rubin E.M."/>
            <person name="Couronne O."/>
            <person name="Poliakov A."/>
            <person name="Huebner N."/>
            <person name="Ganten D."/>
            <person name="Goesele C."/>
            <person name="Hummel O."/>
            <person name="Kreitler T."/>
            <person name="Lee Y.-A."/>
            <person name="Monti J."/>
            <person name="Schulz H."/>
            <person name="Zimdahl H."/>
            <person name="Himmelbauer H."/>
            <person name="Lehrach H."/>
            <person name="Jacob H.J."/>
            <person name="Bromberg S."/>
            <person name="Gullings-Handley J."/>
            <person name="Jensen-Seaman M.I."/>
            <person name="Kwitek A.E."/>
            <person name="Lazar J."/>
            <person name="Pasko D."/>
            <person name="Tonellato P.J."/>
            <person name="Twigger S."/>
            <person name="Ponting C.P."/>
            <person name="Duarte J.M."/>
            <person name="Rice S."/>
            <person name="Goodstadt L."/>
            <person name="Beatson S.A."/>
            <person name="Emes R.D."/>
            <person name="Winter E.E."/>
            <person name="Webber C."/>
            <person name="Brandt P."/>
            <person name="Nyakatura G."/>
            <person name="Adetobi M."/>
            <person name="Chiaromonte F."/>
            <person name="Elnitski L."/>
            <person name="Eswara P."/>
            <person name="Hardison R.C."/>
            <person name="Hou M."/>
            <person name="Kolbe D."/>
            <person name="Makova K."/>
            <person name="Miller W."/>
            <person name="Nekrutenko A."/>
            <person name="Riemer C."/>
            <person name="Schwartz S."/>
            <person name="Taylor J."/>
            <person name="Yang S."/>
            <person name="Zhang Y."/>
            <person name="Lindpaintner K."/>
            <person name="Andrews T.D."/>
            <person name="Caccamo M."/>
            <person name="Clamp M."/>
            <person name="Clarke L."/>
            <person name="Curwen V."/>
            <person name="Durbin R.M."/>
            <person name="Eyras E."/>
            <person name="Searle S.M."/>
            <person name="Cooper G.M."/>
            <person name="Batzoglou S."/>
            <person name="Brudno M."/>
            <person name="Sidow A."/>
            <person name="Stone E.A."/>
            <person name="Payseur B.A."/>
            <person name="Bourque G."/>
            <person name="Lopez-Otin C."/>
            <person name="Puente X.S."/>
            <person name="Chakrabarti K."/>
            <person name="Chatterji S."/>
            <person name="Dewey C."/>
            <person name="Pachter L."/>
            <person name="Bray N."/>
            <person name="Yap V.B."/>
            <person name="Caspi A."/>
            <person name="Tesler G."/>
            <person name="Pevzner P.A."/>
            <person name="Haussler D."/>
            <person name="Roskin K.M."/>
            <person name="Baertsch R."/>
            <person name="Clawson H."/>
            <person name="Furey T.S."/>
            <person name="Hinrichs A.S."/>
            <person name="Karolchik D."/>
            <person name="Kent W.J."/>
            <person name="Rosenbloom K.R."/>
            <person name="Trumbower H."/>
            <person name="Weirauch M."/>
            <person name="Cooper D.N."/>
            <person name="Stenson P.D."/>
            <person name="Ma B."/>
            <person name="Brent M."/>
            <person name="Arumugam M."/>
            <person name="Shteynberg D."/>
            <person name="Copley R.R."/>
            <person name="Taylor M.S."/>
            <person name="Riethman H."/>
            <person name="Mudunuri U."/>
            <person name="Peterson J."/>
            <person name="Guyer M."/>
            <person name="Felsenfeld A."/>
            <person name="Old S."/>
            <person name="Mockrin S."/>
            <person name="Collins F.S."/>
        </authorList>
    </citation>
    <scope>NUCLEOTIDE SEQUENCE [LARGE SCALE GENOMIC DNA]</scope>
    <source>
        <strain>Brown Norway</strain>
    </source>
</reference>
<reference key="2">
    <citation type="submission" date="2005-07" db="EMBL/GenBank/DDBJ databases">
        <authorList>
            <person name="Mural R.J."/>
            <person name="Adams M.D."/>
            <person name="Myers E.W."/>
            <person name="Smith H.O."/>
            <person name="Venter J.C."/>
        </authorList>
    </citation>
    <scope>NUCLEOTIDE SEQUENCE [LARGE SCALE GENOMIC DNA]</scope>
</reference>
<reference key="3">
    <citation type="journal article" date="2004" name="Genome Res.">
        <title>The status, quality, and expansion of the NIH full-length cDNA project: the Mammalian Gene Collection (MGC).</title>
        <authorList>
            <consortium name="The MGC Project Team"/>
        </authorList>
    </citation>
    <scope>NUCLEOTIDE SEQUENCE [LARGE SCALE MRNA]</scope>
    <source>
        <tissue>Heart</tissue>
    </source>
</reference>
<reference key="4">
    <citation type="journal article" date="2012" name="Proc. Natl. Acad. Sci. U.S.A.">
        <title>Heptahelical protein PQLC2 is a lysosomal cationic amino acid exporter underlying the action of cysteamine in cystinosis therapy.</title>
        <authorList>
            <person name="Jezegou A."/>
            <person name="Llinares E."/>
            <person name="Anne C."/>
            <person name="Kieffer-Jaquinod S."/>
            <person name="O'Regan S."/>
            <person name="Aupetit J."/>
            <person name="Chabli A."/>
            <person name="Sagne C."/>
            <person name="Debacker C."/>
            <person name="Chadefaux-Vekemans B."/>
            <person name="Journet A."/>
            <person name="Andre B."/>
            <person name="Gasnier B."/>
        </authorList>
    </citation>
    <scope>FUNCTION</scope>
    <scope>SUBCELLULAR LOCATION</scope>
    <scope>MUTAGENESIS OF 290-LEU-LEU-291</scope>
    <scope>BIOPHYSICOCHEMICAL PROPERTIES</scope>
</reference>
<comment type="function">
    <text evidence="2">Amino acid transporter that specifically mediates the pH-dependent export of the cationic amino acids arginine, histidine and lysine from lysosomes.</text>
</comment>
<comment type="biophysicochemical properties">
    <kinetics>
        <KM evidence="2">3.36 mM for arginine</KM>
    </kinetics>
    <phDependence>
        <text evidence="2">Optimum pH is acidic with no activity detected at a pH higher that 7.0.</text>
    </phDependence>
</comment>
<comment type="subcellular location">
    <subcellularLocation>
        <location evidence="2">Lysosome membrane</location>
        <topology evidence="2">Multi-pass membrane protein</topology>
    </subcellularLocation>
</comment>
<comment type="domain">
    <text evidence="2">The di-leucine motif mediates lysosomal localization.</text>
</comment>
<comment type="similarity">
    <text evidence="3">Belongs to the laat-1 family.</text>
</comment>
<comment type="sequence caution" evidence="3">
    <conflict type="erroneous gene model prediction">
        <sequence resource="EMBL-CDS" id="EDL80912"/>
    </conflict>
</comment>
<comment type="sequence caution" evidence="3">
    <conflict type="erroneous gene model prediction">
        <sequence resource="EMBL-CDS" id="EDL80913"/>
    </conflict>
</comment>
<name>LAAT1_RAT</name>
<evidence type="ECO:0000255" key="1"/>
<evidence type="ECO:0000269" key="2">
    <source>
    </source>
</evidence>
<evidence type="ECO:0000305" key="3"/>
<proteinExistence type="evidence at protein level"/>
<protein>
    <recommendedName>
        <fullName evidence="3">Lysosomal amino acid transporter 1 homolog</fullName>
    </recommendedName>
    <alternativeName>
        <fullName>PQ-loop repeat-containing protein 2</fullName>
    </alternativeName>
    <alternativeName>
        <fullName evidence="3">Solute carrier family 66 member 1</fullName>
    </alternativeName>
</protein>
<keyword id="KW-0029">Amino-acid transport</keyword>
<keyword id="KW-0325">Glycoprotein</keyword>
<keyword id="KW-0458">Lysosome</keyword>
<keyword id="KW-0472">Membrane</keyword>
<keyword id="KW-1185">Reference proteome</keyword>
<keyword id="KW-0677">Repeat</keyword>
<keyword id="KW-0812">Transmembrane</keyword>
<keyword id="KW-1133">Transmembrane helix</keyword>
<keyword id="KW-0813">Transport</keyword>
<feature type="chain" id="PRO_0000423746" description="Lysosomal amino acid transporter 1 homolog">
    <location>
        <begin position="1"/>
        <end position="293"/>
    </location>
</feature>
<feature type="topological domain" description="Lumenal" evidence="1">
    <location>
        <begin position="1"/>
        <end position="37"/>
    </location>
</feature>
<feature type="transmembrane region" description="Helical" evidence="1">
    <location>
        <begin position="38"/>
        <end position="58"/>
    </location>
</feature>
<feature type="topological domain" description="Cytoplasmic" evidence="1">
    <location>
        <begin position="59"/>
        <end position="71"/>
    </location>
</feature>
<feature type="transmembrane region" description="Helical" evidence="1">
    <location>
        <begin position="72"/>
        <end position="92"/>
    </location>
</feature>
<feature type="topological domain" description="Lumenal" evidence="1">
    <location>
        <begin position="93"/>
        <end position="96"/>
    </location>
</feature>
<feature type="transmembrane region" description="Helical" evidence="1">
    <location>
        <begin position="97"/>
        <end position="117"/>
    </location>
</feature>
<feature type="topological domain" description="Cytoplasmic" evidence="1">
    <location>
        <begin position="118"/>
        <end position="126"/>
    </location>
</feature>
<feature type="transmembrane region" description="Helical" evidence="1">
    <location>
        <begin position="127"/>
        <end position="147"/>
    </location>
</feature>
<feature type="topological domain" description="Lumenal" evidence="1">
    <location>
        <begin position="148"/>
        <end position="182"/>
    </location>
</feature>
<feature type="transmembrane region" description="Helical" evidence="1">
    <location>
        <begin position="183"/>
        <end position="203"/>
    </location>
</feature>
<feature type="topological domain" description="Cytoplasmic" evidence="1">
    <location>
        <begin position="204"/>
        <end position="214"/>
    </location>
</feature>
<feature type="transmembrane region" description="Helical" evidence="1">
    <location>
        <begin position="215"/>
        <end position="235"/>
    </location>
</feature>
<feature type="topological domain" description="Lumenal" evidence="1">
    <location>
        <begin position="236"/>
        <end position="254"/>
    </location>
</feature>
<feature type="transmembrane region" description="Helical" evidence="1">
    <location>
        <begin position="255"/>
        <end position="275"/>
    </location>
</feature>
<feature type="topological domain" description="Cytoplasmic" evidence="1">
    <location>
        <begin position="276"/>
        <end position="293"/>
    </location>
</feature>
<feature type="domain" description="PQ-loop 1">
    <location>
        <begin position="34"/>
        <end position="100"/>
    </location>
</feature>
<feature type="domain" description="PQ-loop 2">
    <location>
        <begin position="191"/>
        <end position="243"/>
    </location>
</feature>
<feature type="short sequence motif" description="Di-leucine motif">
    <location>
        <begin position="290"/>
        <end position="291"/>
    </location>
</feature>
<feature type="glycosylation site" description="N-linked (GlcNAc...) asparagine" evidence="1">
    <location>
        <position position="10"/>
    </location>
</feature>
<feature type="mutagenesis site" description="Abolishes lysosomal localization." evidence="2">
    <original>LL</original>
    <variation>AA</variation>
    <location>
        <begin position="290"/>
        <end position="291"/>
    </location>
</feature>
<gene>
    <name type="primary">Slc66a1</name>
    <name type="synonym">Pqlc2</name>
</gene>
<accession>B0BMY1</accession>
<accession>F7FC79</accession>
<dbReference type="EMBL" id="AABR06040567">
    <property type="status" value="NOT_ANNOTATED_CDS"/>
    <property type="molecule type" value="Genomic_DNA"/>
</dbReference>
<dbReference type="EMBL" id="AABR06040568">
    <property type="status" value="NOT_ANNOTATED_CDS"/>
    <property type="molecule type" value="Genomic_DNA"/>
</dbReference>
<dbReference type="EMBL" id="CH473968">
    <property type="protein sequence ID" value="EDL80912.1"/>
    <property type="status" value="ALT_SEQ"/>
    <property type="molecule type" value="Genomic_DNA"/>
</dbReference>
<dbReference type="EMBL" id="CH473968">
    <property type="protein sequence ID" value="EDL80913.1"/>
    <property type="status" value="ALT_SEQ"/>
    <property type="molecule type" value="Genomic_DNA"/>
</dbReference>
<dbReference type="EMBL" id="BC158607">
    <property type="protein sequence ID" value="AAI58608.1"/>
    <property type="molecule type" value="mRNA"/>
</dbReference>
<dbReference type="RefSeq" id="NP_001102159.1">
    <property type="nucleotide sequence ID" value="NM_001108689.2"/>
</dbReference>
<dbReference type="RefSeq" id="NP_001386162.1">
    <property type="nucleotide sequence ID" value="NM_001399233.1"/>
</dbReference>
<dbReference type="RefSeq" id="XP_006239301.1">
    <property type="nucleotide sequence ID" value="XM_006239239.5"/>
</dbReference>
<dbReference type="RefSeq" id="XP_006239302.1">
    <property type="nucleotide sequence ID" value="XM_006239240.3"/>
</dbReference>
<dbReference type="FunCoup" id="B0BMY1">
    <property type="interactions" value="572"/>
</dbReference>
<dbReference type="STRING" id="10116.ENSRNOP00000072028"/>
<dbReference type="GlyCosmos" id="B0BMY1">
    <property type="glycosylation" value="1 site, No reported glycans"/>
</dbReference>
<dbReference type="GlyGen" id="B0BMY1">
    <property type="glycosylation" value="1 site"/>
</dbReference>
<dbReference type="PhosphoSitePlus" id="B0BMY1"/>
<dbReference type="PaxDb" id="10116-ENSRNOP00000023896"/>
<dbReference type="PeptideAtlas" id="B0BMY1"/>
<dbReference type="GeneID" id="362642"/>
<dbReference type="AGR" id="RGD:1311627"/>
<dbReference type="CTD" id="54896"/>
<dbReference type="RGD" id="1311627">
    <property type="gene designation" value="Slc66a1"/>
</dbReference>
<dbReference type="VEuPathDB" id="HostDB:ENSRNOG00000017706"/>
<dbReference type="eggNOG" id="KOG2913">
    <property type="taxonomic scope" value="Eukaryota"/>
</dbReference>
<dbReference type="HOGENOM" id="CLU_019699_3_0_1"/>
<dbReference type="InParanoid" id="B0BMY1"/>
<dbReference type="TreeFam" id="TF313694"/>
<dbReference type="Reactome" id="R-RNO-5223345">
    <property type="pathway name" value="Miscellaneous transport and binding events"/>
</dbReference>
<dbReference type="PRO" id="PR:B0BMY1"/>
<dbReference type="Proteomes" id="UP000002494">
    <property type="component" value="Chromosome 5"/>
</dbReference>
<dbReference type="Proteomes" id="UP000234681">
    <property type="component" value="Chromosome 5"/>
</dbReference>
<dbReference type="Bgee" id="ENSRNOG00000017706">
    <property type="expression patterns" value="Expressed in spleen and 18 other cell types or tissues"/>
</dbReference>
<dbReference type="GO" id="GO:0005765">
    <property type="term" value="C:lysosomal membrane"/>
    <property type="evidence" value="ECO:0000314"/>
    <property type="project" value="UniProtKB"/>
</dbReference>
<dbReference type="GO" id="GO:0031090">
    <property type="term" value="C:organelle membrane"/>
    <property type="evidence" value="ECO:0000266"/>
    <property type="project" value="RGD"/>
</dbReference>
<dbReference type="GO" id="GO:0015174">
    <property type="term" value="F:basic amino acid transmembrane transporter activity"/>
    <property type="evidence" value="ECO:0000314"/>
    <property type="project" value="UniProtKB"/>
</dbReference>
<dbReference type="GO" id="GO:0061459">
    <property type="term" value="F:L-arginine transmembrane transporter activity"/>
    <property type="evidence" value="ECO:0000266"/>
    <property type="project" value="RGD"/>
</dbReference>
<dbReference type="GO" id="GO:0005290">
    <property type="term" value="F:L-histidine transmembrane transporter activity"/>
    <property type="evidence" value="ECO:0000266"/>
    <property type="project" value="RGD"/>
</dbReference>
<dbReference type="GO" id="GO:0015189">
    <property type="term" value="F:L-lysine transmembrane transporter activity"/>
    <property type="evidence" value="ECO:0000266"/>
    <property type="project" value="RGD"/>
</dbReference>
<dbReference type="GO" id="GO:0080144">
    <property type="term" value="P:intracellular amino acid homeostasis"/>
    <property type="evidence" value="ECO:0000315"/>
    <property type="project" value="UniProtKB"/>
</dbReference>
<dbReference type="GO" id="GO:1903826">
    <property type="term" value="P:L-arginine transmembrane transport"/>
    <property type="evidence" value="ECO:0000266"/>
    <property type="project" value="RGD"/>
</dbReference>
<dbReference type="GO" id="GO:0089709">
    <property type="term" value="P:L-histidine transmembrane transport"/>
    <property type="evidence" value="ECO:0000266"/>
    <property type="project" value="RGD"/>
</dbReference>
<dbReference type="GO" id="GO:1903401">
    <property type="term" value="P:L-lysine transmembrane transport"/>
    <property type="evidence" value="ECO:0000266"/>
    <property type="project" value="RGD"/>
</dbReference>
<dbReference type="GO" id="GO:0015819">
    <property type="term" value="P:lysine transport"/>
    <property type="evidence" value="ECO:0000266"/>
    <property type="project" value="RGD"/>
</dbReference>
<dbReference type="FunFam" id="1.20.1280.290:FF:000013">
    <property type="entry name" value="lysosomal amino acid transporter 1 homolog"/>
    <property type="match status" value="1"/>
</dbReference>
<dbReference type="FunFam" id="1.20.1280.290:FF:000017">
    <property type="entry name" value="lysosomal amino acid transporter 1 homolog"/>
    <property type="match status" value="1"/>
</dbReference>
<dbReference type="Gene3D" id="1.20.1280.290">
    <property type="match status" value="2"/>
</dbReference>
<dbReference type="InterPro" id="IPR051415">
    <property type="entry name" value="LAAT-1"/>
</dbReference>
<dbReference type="InterPro" id="IPR006603">
    <property type="entry name" value="PQ-loop_rpt"/>
</dbReference>
<dbReference type="PANTHER" id="PTHR16201:SF36">
    <property type="entry name" value="LYSOSOMAL AMINO ACID TRANSPORTER 1 HOMOLOG"/>
    <property type="match status" value="1"/>
</dbReference>
<dbReference type="PANTHER" id="PTHR16201">
    <property type="entry name" value="SEVEN TRANSMEMBRANE PROTEIN 1-RELATED"/>
    <property type="match status" value="1"/>
</dbReference>
<dbReference type="Pfam" id="PF04193">
    <property type="entry name" value="PQ-loop"/>
    <property type="match status" value="2"/>
</dbReference>
<dbReference type="SMART" id="SM00679">
    <property type="entry name" value="CTNS"/>
    <property type="match status" value="2"/>
</dbReference>
<organism>
    <name type="scientific">Rattus norvegicus</name>
    <name type="common">Rat</name>
    <dbReference type="NCBI Taxonomy" id="10116"/>
    <lineage>
        <taxon>Eukaryota</taxon>
        <taxon>Metazoa</taxon>
        <taxon>Chordata</taxon>
        <taxon>Craniata</taxon>
        <taxon>Vertebrata</taxon>
        <taxon>Euteleostomi</taxon>
        <taxon>Mammalia</taxon>
        <taxon>Eutheria</taxon>
        <taxon>Euarchontoglires</taxon>
        <taxon>Glires</taxon>
        <taxon>Rodentia</taxon>
        <taxon>Myomorpha</taxon>
        <taxon>Muroidea</taxon>
        <taxon>Muridae</taxon>
        <taxon>Murinae</taxon>
        <taxon>Rattus</taxon>
    </lineage>
</organism>